<organism>
    <name type="scientific">Rattus norvegicus</name>
    <name type="common">Rat</name>
    <dbReference type="NCBI Taxonomy" id="10116"/>
    <lineage>
        <taxon>Eukaryota</taxon>
        <taxon>Metazoa</taxon>
        <taxon>Chordata</taxon>
        <taxon>Craniata</taxon>
        <taxon>Vertebrata</taxon>
        <taxon>Euteleostomi</taxon>
        <taxon>Mammalia</taxon>
        <taxon>Eutheria</taxon>
        <taxon>Euarchontoglires</taxon>
        <taxon>Glires</taxon>
        <taxon>Rodentia</taxon>
        <taxon>Myomorpha</taxon>
        <taxon>Muroidea</taxon>
        <taxon>Muridae</taxon>
        <taxon>Murinae</taxon>
        <taxon>Rattus</taxon>
    </lineage>
</organism>
<gene>
    <name evidence="7" type="primary">Mapkap1</name>
    <name evidence="3" type="synonym">Sin1</name>
</gene>
<keyword id="KW-0007">Acetylation</keyword>
<keyword id="KW-1003">Cell membrane</keyword>
<keyword id="KW-0963">Cytoplasm</keyword>
<keyword id="KW-0256">Endoplasmic reticulum</keyword>
<keyword id="KW-0967">Endosome</keyword>
<keyword id="KW-0333">Golgi apparatus</keyword>
<keyword id="KW-0458">Lysosome</keyword>
<keyword id="KW-0472">Membrane</keyword>
<keyword id="KW-0496">Mitochondrion</keyword>
<keyword id="KW-1000">Mitochondrion outer membrane</keyword>
<keyword id="KW-0539">Nucleus</keyword>
<keyword id="KW-0597">Phosphoprotein</keyword>
<keyword id="KW-1185">Reference proteome</keyword>
<keyword id="KW-0346">Stress response</keyword>
<protein>
    <recommendedName>
        <fullName evidence="6">Target of rapamycin complex 2 subunit MAPKAP1</fullName>
        <shortName evidence="6">TORC2 subunit MAPKAP1</shortName>
    </recommendedName>
    <alternativeName>
        <fullName evidence="3">Stress-activated map kinase-interacting protein 1</fullName>
        <shortName evidence="3">SAPK-interacting protein 1</shortName>
    </alternativeName>
</protein>
<name>SIN1_RAT</name>
<dbReference type="EMBL" id="BC079073">
    <property type="protein sequence ID" value="AAH79073.1"/>
    <property type="molecule type" value="mRNA"/>
</dbReference>
<dbReference type="RefSeq" id="NP_001011964.1">
    <property type="nucleotide sequence ID" value="NM_001011964.1"/>
</dbReference>
<dbReference type="RefSeq" id="XP_006234011.1">
    <property type="nucleotide sequence ID" value="XM_006233949.4"/>
</dbReference>
<dbReference type="RefSeq" id="XP_006234012.1">
    <property type="nucleotide sequence ID" value="XM_006233950.4"/>
</dbReference>
<dbReference type="RefSeq" id="XP_017447140.1">
    <property type="nucleotide sequence ID" value="XM_017591651.1"/>
</dbReference>
<dbReference type="RefSeq" id="XP_017447141.1">
    <property type="nucleotide sequence ID" value="XM_017591652.1"/>
</dbReference>
<dbReference type="RefSeq" id="XP_038960693.1">
    <property type="nucleotide sequence ID" value="XM_039104765.2"/>
</dbReference>
<dbReference type="RefSeq" id="XP_063139575.1">
    <property type="nucleotide sequence ID" value="XM_063283505.1"/>
</dbReference>
<dbReference type="RefSeq" id="XP_063139576.1">
    <property type="nucleotide sequence ID" value="XM_063283506.1"/>
</dbReference>
<dbReference type="SMR" id="Q6AYF1"/>
<dbReference type="FunCoup" id="Q6AYF1">
    <property type="interactions" value="4746"/>
</dbReference>
<dbReference type="STRING" id="10116.ENSRNOP00000023889"/>
<dbReference type="iPTMnet" id="Q6AYF1"/>
<dbReference type="PhosphoSitePlus" id="Q6AYF1"/>
<dbReference type="PaxDb" id="10116-ENSRNOP00000023889"/>
<dbReference type="Ensembl" id="ENSRNOT00000119554.1">
    <property type="protein sequence ID" value="ENSRNOP00000078499.1"/>
    <property type="gene ID" value="ENSRNOG00000017583.8"/>
</dbReference>
<dbReference type="GeneID" id="296648"/>
<dbReference type="KEGG" id="rno:296648"/>
<dbReference type="AGR" id="RGD:1305363"/>
<dbReference type="CTD" id="79109"/>
<dbReference type="RGD" id="1305363">
    <property type="gene designation" value="Mapkap1"/>
</dbReference>
<dbReference type="eggNOG" id="KOG3739">
    <property type="taxonomic scope" value="Eukaryota"/>
</dbReference>
<dbReference type="GeneTree" id="ENSGT00390000000642"/>
<dbReference type="HOGENOM" id="CLU_514767_0_0_1"/>
<dbReference type="InParanoid" id="Q6AYF1"/>
<dbReference type="OMA" id="NAKFWPQ"/>
<dbReference type="OrthoDB" id="241990at2759"/>
<dbReference type="PhylomeDB" id="Q6AYF1"/>
<dbReference type="TreeFam" id="TF315174"/>
<dbReference type="Reactome" id="R-RNO-1257604">
    <property type="pathway name" value="PIP3 activates AKT signaling"/>
</dbReference>
<dbReference type="Reactome" id="R-RNO-389357">
    <property type="pathway name" value="CD28 dependent PI3K/Akt signaling"/>
</dbReference>
<dbReference type="Reactome" id="R-RNO-5218920">
    <property type="pathway name" value="VEGFR2 mediated vascular permeability"/>
</dbReference>
<dbReference type="Reactome" id="R-RNO-6804757">
    <property type="pathway name" value="Regulation of TP53 Degradation"/>
</dbReference>
<dbReference type="Reactome" id="R-RNO-9856530">
    <property type="pathway name" value="High laminar flow shear stress activates signaling by PIEZO1 and PECAM1:CDH5:KDR in endothelial cells"/>
</dbReference>
<dbReference type="PRO" id="PR:Q6AYF1"/>
<dbReference type="Proteomes" id="UP000002494">
    <property type="component" value="Chromosome 3"/>
</dbReference>
<dbReference type="Bgee" id="ENSRNOG00000017583">
    <property type="expression patterns" value="Expressed in kidney and 20 other cell types or tissues"/>
</dbReference>
<dbReference type="GO" id="GO:0005737">
    <property type="term" value="C:cytoplasm"/>
    <property type="evidence" value="ECO:0000318"/>
    <property type="project" value="GO_Central"/>
</dbReference>
<dbReference type="GO" id="GO:0005769">
    <property type="term" value="C:early endosome"/>
    <property type="evidence" value="ECO:0000250"/>
    <property type="project" value="UniProtKB"/>
</dbReference>
<dbReference type="GO" id="GO:0031901">
    <property type="term" value="C:early endosome membrane"/>
    <property type="evidence" value="ECO:0007669"/>
    <property type="project" value="UniProtKB-SubCell"/>
</dbReference>
<dbReference type="GO" id="GO:0005783">
    <property type="term" value="C:endoplasmic reticulum"/>
    <property type="evidence" value="ECO:0000250"/>
    <property type="project" value="UniProtKB"/>
</dbReference>
<dbReference type="GO" id="GO:0005789">
    <property type="term" value="C:endoplasmic reticulum membrane"/>
    <property type="evidence" value="ECO:0007669"/>
    <property type="project" value="UniProtKB-SubCell"/>
</dbReference>
<dbReference type="GO" id="GO:0005794">
    <property type="term" value="C:Golgi apparatus"/>
    <property type="evidence" value="ECO:0000266"/>
    <property type="project" value="RGD"/>
</dbReference>
<dbReference type="GO" id="GO:0000139">
    <property type="term" value="C:Golgi membrane"/>
    <property type="evidence" value="ECO:0007669"/>
    <property type="project" value="UniProtKB-SubCell"/>
</dbReference>
<dbReference type="GO" id="GO:0005770">
    <property type="term" value="C:late endosome"/>
    <property type="evidence" value="ECO:0000250"/>
    <property type="project" value="UniProtKB"/>
</dbReference>
<dbReference type="GO" id="GO:0031902">
    <property type="term" value="C:late endosome membrane"/>
    <property type="evidence" value="ECO:0007669"/>
    <property type="project" value="UniProtKB-SubCell"/>
</dbReference>
<dbReference type="GO" id="GO:0005765">
    <property type="term" value="C:lysosomal membrane"/>
    <property type="evidence" value="ECO:0007669"/>
    <property type="project" value="UniProtKB-SubCell"/>
</dbReference>
<dbReference type="GO" id="GO:0005764">
    <property type="term" value="C:lysosome"/>
    <property type="evidence" value="ECO:0000250"/>
    <property type="project" value="UniProtKB"/>
</dbReference>
<dbReference type="GO" id="GO:0005741">
    <property type="term" value="C:mitochondrial outer membrane"/>
    <property type="evidence" value="ECO:0000250"/>
    <property type="project" value="UniProtKB"/>
</dbReference>
<dbReference type="GO" id="GO:0005634">
    <property type="term" value="C:nucleus"/>
    <property type="evidence" value="ECO:0000266"/>
    <property type="project" value="RGD"/>
</dbReference>
<dbReference type="GO" id="GO:0048471">
    <property type="term" value="C:perinuclear region of cytoplasm"/>
    <property type="evidence" value="ECO:0007669"/>
    <property type="project" value="UniProtKB-SubCell"/>
</dbReference>
<dbReference type="GO" id="GO:0005886">
    <property type="term" value="C:plasma membrane"/>
    <property type="evidence" value="ECO:0000266"/>
    <property type="project" value="RGD"/>
</dbReference>
<dbReference type="GO" id="GO:1902554">
    <property type="term" value="C:serine/threonine protein kinase complex"/>
    <property type="evidence" value="ECO:0000266"/>
    <property type="project" value="RGD"/>
</dbReference>
<dbReference type="GO" id="GO:0031932">
    <property type="term" value="C:TORC2 complex"/>
    <property type="evidence" value="ECO:0000250"/>
    <property type="project" value="UniProtKB"/>
</dbReference>
<dbReference type="GO" id="GO:0140767">
    <property type="term" value="F:enzyme-substrate adaptor activity"/>
    <property type="evidence" value="ECO:0000250"/>
    <property type="project" value="UniProtKB"/>
</dbReference>
<dbReference type="GO" id="GO:0060090">
    <property type="term" value="F:molecular adaptor activity"/>
    <property type="evidence" value="ECO:0000266"/>
    <property type="project" value="RGD"/>
</dbReference>
<dbReference type="GO" id="GO:0070300">
    <property type="term" value="F:phosphatidic acid binding"/>
    <property type="evidence" value="ECO:0000266"/>
    <property type="project" value="RGD"/>
</dbReference>
<dbReference type="GO" id="GO:0005547">
    <property type="term" value="F:phosphatidylinositol-3,4,5-trisphosphate binding"/>
    <property type="evidence" value="ECO:0000250"/>
    <property type="project" value="UniProtKB"/>
</dbReference>
<dbReference type="GO" id="GO:0043325">
    <property type="term" value="F:phosphatidylinositol-3,4-bisphosphate binding"/>
    <property type="evidence" value="ECO:0000266"/>
    <property type="project" value="RGD"/>
</dbReference>
<dbReference type="GO" id="GO:0080025">
    <property type="term" value="F:phosphatidylinositol-3,5-bisphosphate binding"/>
    <property type="evidence" value="ECO:0000266"/>
    <property type="project" value="RGD"/>
</dbReference>
<dbReference type="GO" id="GO:0005546">
    <property type="term" value="F:phosphatidylinositol-4,5-bisphosphate binding"/>
    <property type="evidence" value="ECO:0000266"/>
    <property type="project" value="RGD"/>
</dbReference>
<dbReference type="GO" id="GO:0019901">
    <property type="term" value="F:protein kinase binding"/>
    <property type="evidence" value="ECO:0000250"/>
    <property type="project" value="ParkinsonsUK-UCL"/>
</dbReference>
<dbReference type="GO" id="GO:0031267">
    <property type="term" value="F:small GTPase binding"/>
    <property type="evidence" value="ECO:0000266"/>
    <property type="project" value="RGD"/>
</dbReference>
<dbReference type="GO" id="GO:0032869">
    <property type="term" value="P:cellular response to insulin stimulus"/>
    <property type="evidence" value="ECO:0000250"/>
    <property type="project" value="UniProtKB"/>
</dbReference>
<dbReference type="GO" id="GO:0046580">
    <property type="term" value="P:negative regulation of Ras protein signal transduction"/>
    <property type="evidence" value="ECO:0000266"/>
    <property type="project" value="RGD"/>
</dbReference>
<dbReference type="GO" id="GO:1900407">
    <property type="term" value="P:regulation of cellular response to oxidative stress"/>
    <property type="evidence" value="ECO:0000266"/>
    <property type="project" value="RGD"/>
</dbReference>
<dbReference type="GO" id="GO:0038203">
    <property type="term" value="P:TORC2 signaling"/>
    <property type="evidence" value="ECO:0000250"/>
    <property type="project" value="UniProtKB"/>
</dbReference>
<dbReference type="CDD" id="cd13331">
    <property type="entry name" value="PH_Avo1"/>
    <property type="match status" value="1"/>
</dbReference>
<dbReference type="FunFam" id="2.30.29.30:FF:000585">
    <property type="entry name" value="target of rapamycin complex 2 subunit MAPKAP1 isoform X3"/>
    <property type="match status" value="1"/>
</dbReference>
<dbReference type="Gene3D" id="2.30.29.30">
    <property type="entry name" value="Pleckstrin-homology domain (PH domain)/Phosphotyrosine-binding domain (PTB)"/>
    <property type="match status" value="1"/>
</dbReference>
<dbReference type="InterPro" id="IPR031567">
    <property type="entry name" value="CRIM_dom"/>
</dbReference>
<dbReference type="InterPro" id="IPR011993">
    <property type="entry name" value="PH-like_dom_sf"/>
</dbReference>
<dbReference type="InterPro" id="IPR008828">
    <property type="entry name" value="Sin1/Avo1"/>
</dbReference>
<dbReference type="InterPro" id="IPR032679">
    <property type="entry name" value="Sin1_N"/>
</dbReference>
<dbReference type="InterPro" id="IPR031313">
    <property type="entry name" value="Sin1_PH_dom"/>
</dbReference>
<dbReference type="PANTHER" id="PTHR13335">
    <property type="entry name" value="TARGET OF RAPAMYCIN COMPLEX 2 SUBUNIT MAPKAP1"/>
    <property type="match status" value="1"/>
</dbReference>
<dbReference type="PANTHER" id="PTHR13335:SF1">
    <property type="entry name" value="TARGET OF RAPAMYCIN COMPLEX 2 SUBUNIT MAPKAP1"/>
    <property type="match status" value="1"/>
</dbReference>
<dbReference type="Pfam" id="PF16978">
    <property type="entry name" value="CRIM"/>
    <property type="match status" value="1"/>
</dbReference>
<dbReference type="Pfam" id="PF05422">
    <property type="entry name" value="SIN1"/>
    <property type="match status" value="1"/>
</dbReference>
<dbReference type="Pfam" id="PF16979">
    <property type="entry name" value="SIN1_PH"/>
    <property type="match status" value="1"/>
</dbReference>
<proteinExistence type="evidence at transcript level"/>
<comment type="function">
    <text evidence="2 3">Component of the mechanistic target of rapamycin complex 2 (mTORC2), which transduces signals from growth factors to pathways involved in proliferation, cytoskeletal organization, lipogenesis and anabolic output (By similarity). In response to growth factors, mTORC2 phosphorylates and activates AGC protein kinase family members, including AKT (AKT1, AKT2 and AKT3), PKC (PRKCA, PRKCB and PRKCE) and SGK1 (By similarity). In contrast to mTORC1, mTORC2 is nutrient-insensitive (By similarity). Within the mTORC2 complex, MAPKAP1/SIN1 acts as a substrate adapter which recognizes and binds AGC protein kinase family members for phosphorylation by MTOR (By similarity). mTORC2 plays a critical role in AKT1 activation by mediating phosphorylation of different sites depending on the context, such as 'Thr-450', 'Ser-473', 'Ser-477' or 'Thr-479', facilitating the phosphorylation of the activation loop of AKT1 on 'Thr-308' by PDPK1/PDK1 which is a prerequisite for full activation (By similarity). mTORC2 catalyzes the phosphorylation of SGK1 at 'Ser-422' and of PRKCA on 'Ser-657' (By similarity). The mTORC2 complex also phosphorylates various proteins involved in insulin signaling, such as FBXW8 and IGF2BP1 (By similarity). mTORC2 acts upstream of Rho GTPases to regulate the actin cytoskeleton, probably by activating one or more Rho-type guanine nucleotide exchange factors (By similarity). mTORC2 promotes the serum-induced formation of stress-fibers or F-actin (By similarity). MAPKAP1 inhibits MAP3K2 by preventing its dimerization and autophosphorylation (By similarity). Inhibits HRAS and KRAS independently of mTORC2 complex (By similarity). Enhances osmotic stress-induced phosphorylation of ATF2 and ATF2-mediated transcription (By similarity). Involved in ciliogenesis, regulates cilia length through its interaction with CCDC28B independently of mTORC2 complex (By similarity).</text>
</comment>
<comment type="activity regulation">
    <text evidence="3">Phosphatidylinositol 3,4,5-trisphosphate (PI(3,4,5)P3) promotes MTOR activation by relieving MAPKAP1/SIN1-mediated inhibition of MTOR that takes place in absence of PI(3,4,5)P3.</text>
</comment>
<comment type="subunit">
    <text evidence="1 3">Component of the mechanistic target of rapamycin complex 2 (mTORC2), consisting in two heterotretramers composed of MTOR, MLST8, RICTOR and MAPKAP1/SIN1. The mTORC2 core complex associates with PRR5/PROTOR1 and/or PRR5L/PROTOR2. Contrary to mTORC1, mTORC2 does not bind to and is not sensitive to FKBP12-rapamycin. Interacts with MAP3K2. Interacts with ATF2. Interacts with MAPK8. Interacts with GTP-bound HRAS and KRAS; inhibiting their activity (By similarity). Interacts with IFNAR2 (By similarity).</text>
</comment>
<comment type="subcellular location">
    <subcellularLocation>
        <location evidence="3">Cell membrane</location>
        <topology evidence="3">Peripheral membrane protein</topology>
    </subcellularLocation>
    <subcellularLocation>
        <location evidence="3">Endoplasmic reticulum membrane</location>
        <topology evidence="3">Peripheral membrane protein</topology>
    </subcellularLocation>
    <subcellularLocation>
        <location evidence="3">Early endosome membrane</location>
        <topology evidence="3">Peripheral membrane protein</topology>
    </subcellularLocation>
    <subcellularLocation>
        <location evidence="3">Late endosome membrane</location>
        <topology evidence="3">Peripheral membrane protein</topology>
    </subcellularLocation>
    <subcellularLocation>
        <location evidence="3">Lysosome membrane</location>
        <topology evidence="3">Peripheral membrane protein</topology>
    </subcellularLocation>
    <subcellularLocation>
        <location evidence="3">Golgi apparatus membrane</location>
        <topology evidence="3">Peripheral membrane protein</topology>
    </subcellularLocation>
    <subcellularLocation>
        <location evidence="3">Mitochondrion outer membrane</location>
        <topology evidence="3">Peripheral membrane protein</topology>
    </subcellularLocation>
    <subcellularLocation>
        <location evidence="2">Cytoplasm</location>
        <location evidence="2">Perinuclear region</location>
    </subcellularLocation>
    <subcellularLocation>
        <location evidence="3">Nucleus</location>
    </subcellularLocation>
    <text evidence="2 3">The mTORC2 complex localizes to membranes: mTORC2 is active at the plasma membrane, endoplasmic reticulum membrane, lysosomes and perinuclear region. Iin lysosomal membrane, mTORC2 is sensitive to lysosomal positioning in the cell (By similarity). Following phosphorylation by PKC, localizes to the perinuclear region, where the mTORC2 complexe specifically phosphorylates SGK1, but not AKT (By similarity).</text>
</comment>
<comment type="domain">
    <text evidence="3">The CRIM domain forms a ubiquitin-like fold with a characteristic acidic loop, which recognizes and binds AGC protein kinase family members substrates.</text>
</comment>
<comment type="domain">
    <text evidence="3">The SIN1-type PH binds phosphatidylinositol 3,4,5-trisphosphate (PI(3,4,5)P3). It plays a dual role in mTORC2: in absence of PI(3,4,5)P3, it binds and inactivates MTOR. PI(3,4,5)P3-binding relieves the inhibition, leading to mTORC2 activation.</text>
</comment>
<comment type="PTM">
    <text evidence="2">Phosphorylation at Ser-128 by PKC promotes relocalization to the perinuclear region, where the mTORC2 complex specifically mediates phosphorylation of SGK1. Phosphorylated at Thr-86 by AKT1 or RPS6KB1 in the presence of growth factors; the effect of this phosphorylation is however unclear. According to two studies, phosphorylation at Thr-86 by AKT1 is part of a positive feedback loop that increases mTORC2 activation. According to another study, phosphorylation at Thr-86 and Thr-398 by RPS6KB1 promotes dissociation from the mTORC2 complex, leading to inhibit mTORC2 signaling.</text>
</comment>
<comment type="similarity">
    <text evidence="6">Belongs to the SIN1 family.</text>
</comment>
<feature type="initiator methionine" description="Removed" evidence="3">
    <location>
        <position position="1"/>
    </location>
</feature>
<feature type="chain" id="PRO_0000328036" description="Target of rapamycin complex 2 subunit MAPKAP1">
    <location>
        <begin position="2"/>
        <end position="522"/>
    </location>
</feature>
<feature type="domain" description="CRIM" evidence="4">
    <location>
        <begin position="139"/>
        <end position="267"/>
    </location>
</feature>
<feature type="domain" description="SIN1-type PH" evidence="4">
    <location>
        <begin position="382"/>
        <end position="487"/>
    </location>
</feature>
<feature type="region of interest" description="Interaction with NBN" evidence="3">
    <location>
        <begin position="2"/>
        <end position="267"/>
    </location>
</feature>
<feature type="region of interest" description="Interaction with MAP3K2" evidence="3">
    <location>
        <begin position="2"/>
        <end position="184"/>
    </location>
</feature>
<feature type="region of interest" description="Disordered" evidence="5">
    <location>
        <begin position="38"/>
        <end position="59"/>
    </location>
</feature>
<feature type="region of interest" description="SIN1-type RBD" evidence="4">
    <location>
        <begin position="279"/>
        <end position="353"/>
    </location>
</feature>
<feature type="region of interest" description="Interaction with ATF2" evidence="3">
    <location>
        <begin position="468"/>
        <end position="522"/>
    </location>
</feature>
<feature type="binding site" evidence="3">
    <location>
        <position position="393"/>
    </location>
    <ligand>
        <name>a 1,2-diacyl-sn-glycero-3-phospho-(1D-myo-inositol-3,4,5-trisphosphate)</name>
        <dbReference type="ChEBI" id="CHEBI:57836"/>
    </ligand>
</feature>
<feature type="binding site" evidence="3">
    <location>
        <position position="428"/>
    </location>
    <ligand>
        <name>a 1,2-diacyl-sn-glycero-3-phospho-(1D-myo-inositol-3,4,5-trisphosphate)</name>
        <dbReference type="ChEBI" id="CHEBI:57836"/>
    </ligand>
</feature>
<feature type="binding site" evidence="3">
    <location>
        <position position="464"/>
    </location>
    <ligand>
        <name>a 1,2-diacyl-sn-glycero-3-phospho-(1D-myo-inositol-3,4,5-trisphosphate)</name>
        <dbReference type="ChEBI" id="CHEBI:57836"/>
    </ligand>
</feature>
<feature type="modified residue" description="N-acetylalanine" evidence="3">
    <location>
        <position position="2"/>
    </location>
</feature>
<feature type="modified residue" description="Phosphothreonine" evidence="3">
    <location>
        <position position="86"/>
    </location>
</feature>
<feature type="modified residue" description="Phosphoserine" evidence="3">
    <location>
        <position position="128"/>
    </location>
</feature>
<feature type="modified residue" description="Phosphoserine" evidence="3">
    <location>
        <position position="186"/>
    </location>
</feature>
<feature type="modified residue" description="Phosphoserine" evidence="3">
    <location>
        <position position="315"/>
    </location>
</feature>
<feature type="modified residue" description="Phosphoserine" evidence="3">
    <location>
        <position position="356"/>
    </location>
</feature>
<feature type="modified residue" description="Phosphothreonine" evidence="2">
    <location>
        <position position="398"/>
    </location>
</feature>
<feature type="modified residue" description="Phosphoserine" evidence="3">
    <location>
        <position position="510"/>
    </location>
</feature>
<sequence>MAFLDNPTIILAHIRQSHVTSDDTGMCEMVLIDHDVDLEKTHPPSVPGDSGSEVQGSSGETQGYIYAQSVDITSSWDFGIRRRSNTAQRLERLRKERQNQIKCKNIQWKERNSKQSAQELKSLFEKKSLKEKPPSSGKQSILSVRLEQCPLQLNNPFNEYSKFDGKGHVGTTATKKIDVYLPLHSSQDRLLPMTVVTMASARVQDLIGLICWQYTSEGREPKLNDNVSAYCLHIAEDDGEVDTDFPPLDSNEPIHKFGFSTLALVEKYSSPGLTSKESLFVRINAAHGFSLIQVDNTKVTMKEILLKALKRRKGSQKISGPQYRLEKQSEPNIGVDLESTLESQNAWEFCLVRENSSRADGVFEEDSQIDIATVQDMLSSHHYKSFKVSMIHRLRFTTDVQLGISGDKVEIDPVTNQKASTKFWIKQKPISIDCDLLCACDLAEEKSPSHAVFKLTYLSSHDYKHLYFESDAATVSEIVLKVNYILESRASTARADYFAQKQRKLNRRTSFSFQKEKKSGQQ</sequence>
<evidence type="ECO:0000250" key="1">
    <source>
        <dbReference type="UniProtKB" id="Q6QD73"/>
    </source>
</evidence>
<evidence type="ECO:0000250" key="2">
    <source>
        <dbReference type="UniProtKB" id="Q8BKH7"/>
    </source>
</evidence>
<evidence type="ECO:0000250" key="3">
    <source>
        <dbReference type="UniProtKB" id="Q9BPZ7"/>
    </source>
</evidence>
<evidence type="ECO:0000255" key="4"/>
<evidence type="ECO:0000256" key="5">
    <source>
        <dbReference type="SAM" id="MobiDB-lite"/>
    </source>
</evidence>
<evidence type="ECO:0000305" key="6"/>
<evidence type="ECO:0000312" key="7">
    <source>
        <dbReference type="RGD" id="1305363"/>
    </source>
</evidence>
<accession>Q6AYF1</accession>
<reference key="1">
    <citation type="journal article" date="2004" name="Genome Res.">
        <title>The status, quality, and expansion of the NIH full-length cDNA project: the Mammalian Gene Collection (MGC).</title>
        <authorList>
            <consortium name="The MGC Project Team"/>
        </authorList>
    </citation>
    <scope>NUCLEOTIDE SEQUENCE [LARGE SCALE MRNA]</scope>
    <source>
        <tissue>Lung</tissue>
    </source>
</reference>